<dbReference type="EC" id="5.4.99.25" evidence="1"/>
<dbReference type="EMBL" id="AE009439">
    <property type="protein sequence ID" value="AAM01350.1"/>
    <property type="molecule type" value="Genomic_DNA"/>
</dbReference>
<dbReference type="RefSeq" id="WP_011018505.1">
    <property type="nucleotide sequence ID" value="NC_003551.1"/>
</dbReference>
<dbReference type="SMR" id="Q8TZ08"/>
<dbReference type="FunCoup" id="Q8TZ08">
    <property type="interactions" value="194"/>
</dbReference>
<dbReference type="STRING" id="190192.MK0133"/>
<dbReference type="PaxDb" id="190192-MK0133"/>
<dbReference type="EnsemblBacteria" id="AAM01350">
    <property type="protein sequence ID" value="AAM01350"/>
    <property type="gene ID" value="MK0133"/>
</dbReference>
<dbReference type="GeneID" id="1477436"/>
<dbReference type="KEGG" id="mka:MK0133"/>
<dbReference type="PATRIC" id="fig|190192.8.peg.132"/>
<dbReference type="HOGENOM" id="CLU_032087_3_0_2"/>
<dbReference type="InParanoid" id="Q8TZ08"/>
<dbReference type="OrthoDB" id="35866at2157"/>
<dbReference type="Proteomes" id="UP000001826">
    <property type="component" value="Chromosome"/>
</dbReference>
<dbReference type="GO" id="GO:0003723">
    <property type="term" value="F:RNA binding"/>
    <property type="evidence" value="ECO:0007669"/>
    <property type="project" value="InterPro"/>
</dbReference>
<dbReference type="GO" id="GO:0160148">
    <property type="term" value="F:tRNA pseudouridine(55) synthase activity"/>
    <property type="evidence" value="ECO:0007669"/>
    <property type="project" value="UniProtKB-EC"/>
</dbReference>
<dbReference type="GO" id="GO:0000495">
    <property type="term" value="P:box H/ACA sno(s)RNA 3'-end processing"/>
    <property type="evidence" value="ECO:0007669"/>
    <property type="project" value="TreeGrafter"/>
</dbReference>
<dbReference type="GO" id="GO:1990481">
    <property type="term" value="P:mRNA pseudouridine synthesis"/>
    <property type="evidence" value="ECO:0007669"/>
    <property type="project" value="TreeGrafter"/>
</dbReference>
<dbReference type="GO" id="GO:0031118">
    <property type="term" value="P:rRNA pseudouridine synthesis"/>
    <property type="evidence" value="ECO:0007669"/>
    <property type="project" value="TreeGrafter"/>
</dbReference>
<dbReference type="GO" id="GO:0031120">
    <property type="term" value="P:snRNA pseudouridine synthesis"/>
    <property type="evidence" value="ECO:0007669"/>
    <property type="project" value="TreeGrafter"/>
</dbReference>
<dbReference type="GO" id="GO:0031119">
    <property type="term" value="P:tRNA pseudouridine synthesis"/>
    <property type="evidence" value="ECO:0007669"/>
    <property type="project" value="UniProtKB-UniRule"/>
</dbReference>
<dbReference type="CDD" id="cd02572">
    <property type="entry name" value="PseudoU_synth_hDyskerin"/>
    <property type="match status" value="1"/>
</dbReference>
<dbReference type="CDD" id="cd21148">
    <property type="entry name" value="PUA_Cbf5"/>
    <property type="match status" value="1"/>
</dbReference>
<dbReference type="FunFam" id="3.30.2350.10:FF:000001">
    <property type="entry name" value="H/ACA ribonucleoprotein complex subunit CBF5"/>
    <property type="match status" value="1"/>
</dbReference>
<dbReference type="Gene3D" id="3.30.2350.10">
    <property type="entry name" value="Pseudouridine synthase"/>
    <property type="match status" value="1"/>
</dbReference>
<dbReference type="Gene3D" id="2.30.130.10">
    <property type="entry name" value="PUA domain"/>
    <property type="match status" value="1"/>
</dbReference>
<dbReference type="HAMAP" id="MF_01081">
    <property type="entry name" value="TruB_arch"/>
    <property type="match status" value="1"/>
</dbReference>
<dbReference type="InterPro" id="IPR012960">
    <property type="entry name" value="Dyskerin-like"/>
</dbReference>
<dbReference type="InterPro" id="IPR020103">
    <property type="entry name" value="PsdUridine_synth_cat_dom_sf"/>
</dbReference>
<dbReference type="InterPro" id="IPR002501">
    <property type="entry name" value="PsdUridine_synth_N"/>
</dbReference>
<dbReference type="InterPro" id="IPR002478">
    <property type="entry name" value="PUA"/>
</dbReference>
<dbReference type="InterPro" id="IPR015947">
    <property type="entry name" value="PUA-like_sf"/>
</dbReference>
<dbReference type="InterPro" id="IPR036974">
    <property type="entry name" value="PUA_sf"/>
</dbReference>
<dbReference type="InterPro" id="IPR004802">
    <property type="entry name" value="tRNA_PsdUridine_synth_B_fam"/>
</dbReference>
<dbReference type="InterPro" id="IPR026326">
    <property type="entry name" value="TruB_arch"/>
</dbReference>
<dbReference type="InterPro" id="IPR032819">
    <property type="entry name" value="TruB_C"/>
</dbReference>
<dbReference type="InterPro" id="IPR004521">
    <property type="entry name" value="Uncharacterised_CHP00451"/>
</dbReference>
<dbReference type="NCBIfam" id="TIGR00425">
    <property type="entry name" value="CBF5"/>
    <property type="match status" value="1"/>
</dbReference>
<dbReference type="NCBIfam" id="NF003280">
    <property type="entry name" value="PRK04270.1"/>
    <property type="match status" value="1"/>
</dbReference>
<dbReference type="NCBIfam" id="TIGR00451">
    <property type="entry name" value="unchar_dom_2"/>
    <property type="match status" value="1"/>
</dbReference>
<dbReference type="PANTHER" id="PTHR23127">
    <property type="entry name" value="CENTROMERE/MICROTUBULE BINDING PROTEIN CBF5"/>
    <property type="match status" value="1"/>
</dbReference>
<dbReference type="PANTHER" id="PTHR23127:SF0">
    <property type="entry name" value="H_ACA RIBONUCLEOPROTEIN COMPLEX SUBUNIT DKC1"/>
    <property type="match status" value="1"/>
</dbReference>
<dbReference type="Pfam" id="PF08068">
    <property type="entry name" value="DKCLD"/>
    <property type="match status" value="1"/>
</dbReference>
<dbReference type="Pfam" id="PF01472">
    <property type="entry name" value="PUA"/>
    <property type="match status" value="1"/>
</dbReference>
<dbReference type="Pfam" id="PF16198">
    <property type="entry name" value="TruB_C_2"/>
    <property type="match status" value="1"/>
</dbReference>
<dbReference type="Pfam" id="PF01509">
    <property type="entry name" value="TruB_N"/>
    <property type="match status" value="1"/>
</dbReference>
<dbReference type="SMART" id="SM01136">
    <property type="entry name" value="DKCLD"/>
    <property type="match status" value="1"/>
</dbReference>
<dbReference type="SMART" id="SM00359">
    <property type="entry name" value="PUA"/>
    <property type="match status" value="1"/>
</dbReference>
<dbReference type="SUPFAM" id="SSF55120">
    <property type="entry name" value="Pseudouridine synthase"/>
    <property type="match status" value="1"/>
</dbReference>
<dbReference type="SUPFAM" id="SSF88697">
    <property type="entry name" value="PUA domain-like"/>
    <property type="match status" value="1"/>
</dbReference>
<dbReference type="PROSITE" id="PS50890">
    <property type="entry name" value="PUA"/>
    <property type="match status" value="1"/>
</dbReference>
<protein>
    <recommendedName>
        <fullName evidence="1">Probable tRNA pseudouridine synthase B</fullName>
        <ecNumber evidence="1">5.4.99.25</ecNumber>
    </recommendedName>
    <alternativeName>
        <fullName evidence="1">tRNA pseudouridine(55) synthase</fullName>
        <shortName evidence="1">Psi55 synthase</shortName>
    </alternativeName>
    <alternativeName>
        <fullName evidence="1">tRNA pseudouridylate synthase</fullName>
    </alternativeName>
    <alternativeName>
        <fullName evidence="1">tRNA-uridine isomerase</fullName>
    </alternativeName>
</protein>
<gene>
    <name evidence="1" type="primary">truB</name>
    <name type="ordered locus">MK0133</name>
</gene>
<name>TRUB_METKA</name>
<comment type="function">
    <text evidence="1">Could be responsible for synthesis of pseudouridine from uracil-55 in the psi GC loop of transfer RNAs.</text>
</comment>
<comment type="catalytic activity">
    <reaction evidence="1">
        <text>uridine(55) in tRNA = pseudouridine(55) in tRNA</text>
        <dbReference type="Rhea" id="RHEA:42532"/>
        <dbReference type="Rhea" id="RHEA-COMP:10101"/>
        <dbReference type="Rhea" id="RHEA-COMP:10102"/>
        <dbReference type="ChEBI" id="CHEBI:65314"/>
        <dbReference type="ChEBI" id="CHEBI:65315"/>
        <dbReference type="EC" id="5.4.99.25"/>
    </reaction>
</comment>
<comment type="similarity">
    <text evidence="1">Belongs to the pseudouridine synthase TruB family. Type 2 subfamily.</text>
</comment>
<evidence type="ECO:0000255" key="1">
    <source>
        <dbReference type="HAMAP-Rule" id="MF_01081"/>
    </source>
</evidence>
<keyword id="KW-0413">Isomerase</keyword>
<keyword id="KW-1185">Reference proteome</keyword>
<keyword id="KW-0819">tRNA processing</keyword>
<reference key="1">
    <citation type="journal article" date="2002" name="Proc. Natl. Acad. Sci. U.S.A.">
        <title>The complete genome of hyperthermophile Methanopyrus kandleri AV19 and monophyly of archaeal methanogens.</title>
        <authorList>
            <person name="Slesarev A.I."/>
            <person name="Mezhevaya K.V."/>
            <person name="Makarova K.S."/>
            <person name="Polushin N.N."/>
            <person name="Shcherbinina O.V."/>
            <person name="Shakhova V.V."/>
            <person name="Belova G.I."/>
            <person name="Aravind L."/>
            <person name="Natale D.A."/>
            <person name="Rogozin I.B."/>
            <person name="Tatusov R.L."/>
            <person name="Wolf Y.I."/>
            <person name="Stetter K.O."/>
            <person name="Malykh A.G."/>
            <person name="Koonin E.V."/>
            <person name="Kozyavkin S.A."/>
        </authorList>
    </citation>
    <scope>NUCLEOTIDE SEQUENCE [LARGE SCALE GENOMIC DNA]</scope>
    <source>
        <strain>AV19 / DSM 6324 / JCM 9639 / NBRC 100938</strain>
    </source>
</reference>
<accession>Q8TZ08</accession>
<proteinExistence type="inferred from homology"/>
<sequence>MSGDKDRRLPFDRDREMITKAEVETDPRYGCPPEERPIEEYIMKGVINLDKPAGPTSHEVVAWVKEIFGLSKAGHGGTLDPKVTGVLPIALEKATKIIQTLLPAGKEYVTIMHLHGDVDEEELERVVKEFEGTILQRPPLRSAVKRRVRPKKIYYIDILEIDGRDVLMRVGCQAGTYIRKLCHDIGEALGVGAHMAELRRTRTGPFSEENAVTLHDVKDAYEFWKEEGWEEPLRHVVRPMEEGLEHLPRIEIRDTAVDAICHGANLAAPGIVRVEKGIQPGDLVAIFTLKGEAVALGVAKATWKEMLHADRGIMVDTKRVLMEPGTYPKAWGLKTPGE</sequence>
<organism>
    <name type="scientific">Methanopyrus kandleri (strain AV19 / DSM 6324 / JCM 9639 / NBRC 100938)</name>
    <dbReference type="NCBI Taxonomy" id="190192"/>
    <lineage>
        <taxon>Archaea</taxon>
        <taxon>Methanobacteriati</taxon>
        <taxon>Methanobacteriota</taxon>
        <taxon>Methanomada group</taxon>
        <taxon>Methanopyri</taxon>
        <taxon>Methanopyrales</taxon>
        <taxon>Methanopyraceae</taxon>
        <taxon>Methanopyrus</taxon>
    </lineage>
</organism>
<feature type="chain" id="PRO_0000121960" description="Probable tRNA pseudouridine synthase B">
    <location>
        <begin position="1"/>
        <end position="338"/>
    </location>
</feature>
<feature type="domain" description="PUA" evidence="1">
    <location>
        <begin position="247"/>
        <end position="322"/>
    </location>
</feature>
<feature type="active site" description="Nucleophile" evidence="1">
    <location>
        <position position="80"/>
    </location>
</feature>